<gene>
    <name evidence="1" type="primary">dinB</name>
    <name type="ordered locus">DET0011</name>
</gene>
<sequence length="390" mass="43239">MAIRRVMHVDLDAFFVSVEQSLRPELKSKPVIVGGKPERRGVVAAASYEARKFGIHSGMPLLSAKHLCPQAVFIEGNHRLYREYSEKFMQILSDFSPFLEPMGLDEAYLEVTGFESLHGSIGEMALKIRRRITAELSINASIGIANSKVVAKIATERAKPNGQCEVPAGEEAAFLAPLDISIMPGIGKKTEYHLKSLGINTLGRLAGIPATFLKIHLGTYAPYLLNAAAGIDNRPVEMPAEAKSISRETTFETDTRNHTFLEAKLGYLSEKIAATLRKRGKQARVVQIKIRFADFTTLTRQKHLNHPCSGNQEIFQTALKLMNGILDSDRRSVRLLGVGISDFCGPEKQLEIDPARARLEKLDASLDKIRQKYGFGSVQTGRTYKLKDLF</sequence>
<protein>
    <recommendedName>
        <fullName evidence="1">DNA polymerase IV</fullName>
        <shortName evidence="1">Pol IV</shortName>
        <ecNumber evidence="1">2.7.7.7</ecNumber>
    </recommendedName>
</protein>
<feature type="chain" id="PRO_1000137127" description="DNA polymerase IV">
    <location>
        <begin position="1"/>
        <end position="390"/>
    </location>
</feature>
<feature type="domain" description="UmuC" evidence="1">
    <location>
        <begin position="6"/>
        <end position="187"/>
    </location>
</feature>
<feature type="active site" evidence="1">
    <location>
        <position position="106"/>
    </location>
</feature>
<feature type="binding site" evidence="1">
    <location>
        <position position="10"/>
    </location>
    <ligand>
        <name>Mg(2+)</name>
        <dbReference type="ChEBI" id="CHEBI:18420"/>
    </ligand>
</feature>
<feature type="binding site" evidence="1">
    <location>
        <position position="105"/>
    </location>
    <ligand>
        <name>Mg(2+)</name>
        <dbReference type="ChEBI" id="CHEBI:18420"/>
    </ligand>
</feature>
<feature type="site" description="Substrate discrimination" evidence="1">
    <location>
        <position position="15"/>
    </location>
</feature>
<accession>Q3ZAI3</accession>
<proteinExistence type="inferred from homology"/>
<keyword id="KW-0963">Cytoplasm</keyword>
<keyword id="KW-0227">DNA damage</keyword>
<keyword id="KW-0234">DNA repair</keyword>
<keyword id="KW-0235">DNA replication</keyword>
<keyword id="KW-0238">DNA-binding</keyword>
<keyword id="KW-0239">DNA-directed DNA polymerase</keyword>
<keyword id="KW-0460">Magnesium</keyword>
<keyword id="KW-0479">Metal-binding</keyword>
<keyword id="KW-0515">Mutator protein</keyword>
<keyword id="KW-0548">Nucleotidyltransferase</keyword>
<keyword id="KW-0808">Transferase</keyword>
<dbReference type="EC" id="2.7.7.7" evidence="1"/>
<dbReference type="EMBL" id="CP000027">
    <property type="protein sequence ID" value="AAW39165.1"/>
    <property type="molecule type" value="Genomic_DNA"/>
</dbReference>
<dbReference type="RefSeq" id="WP_010935821.1">
    <property type="nucleotide sequence ID" value="NC_002936.3"/>
</dbReference>
<dbReference type="SMR" id="Q3ZAI3"/>
<dbReference type="FunCoup" id="Q3ZAI3">
    <property type="interactions" value="308"/>
</dbReference>
<dbReference type="STRING" id="243164.DET0011"/>
<dbReference type="GeneID" id="3229123"/>
<dbReference type="KEGG" id="det:DET0011"/>
<dbReference type="PATRIC" id="fig|243164.10.peg.10"/>
<dbReference type="eggNOG" id="COG0389">
    <property type="taxonomic scope" value="Bacteria"/>
</dbReference>
<dbReference type="HOGENOM" id="CLU_012348_1_2_0"/>
<dbReference type="InParanoid" id="Q3ZAI3"/>
<dbReference type="Proteomes" id="UP000008289">
    <property type="component" value="Chromosome"/>
</dbReference>
<dbReference type="GO" id="GO:0005829">
    <property type="term" value="C:cytosol"/>
    <property type="evidence" value="ECO:0007669"/>
    <property type="project" value="TreeGrafter"/>
</dbReference>
<dbReference type="GO" id="GO:0003684">
    <property type="term" value="F:damaged DNA binding"/>
    <property type="evidence" value="ECO:0007669"/>
    <property type="project" value="InterPro"/>
</dbReference>
<dbReference type="GO" id="GO:0003887">
    <property type="term" value="F:DNA-directed DNA polymerase activity"/>
    <property type="evidence" value="ECO:0007669"/>
    <property type="project" value="UniProtKB-UniRule"/>
</dbReference>
<dbReference type="GO" id="GO:0000287">
    <property type="term" value="F:magnesium ion binding"/>
    <property type="evidence" value="ECO:0007669"/>
    <property type="project" value="UniProtKB-UniRule"/>
</dbReference>
<dbReference type="GO" id="GO:0006261">
    <property type="term" value="P:DNA-templated DNA replication"/>
    <property type="evidence" value="ECO:0007669"/>
    <property type="project" value="UniProtKB-UniRule"/>
</dbReference>
<dbReference type="GO" id="GO:0042276">
    <property type="term" value="P:error-prone translesion synthesis"/>
    <property type="evidence" value="ECO:0007669"/>
    <property type="project" value="TreeGrafter"/>
</dbReference>
<dbReference type="GO" id="GO:0009432">
    <property type="term" value="P:SOS response"/>
    <property type="evidence" value="ECO:0007669"/>
    <property type="project" value="TreeGrafter"/>
</dbReference>
<dbReference type="CDD" id="cd03586">
    <property type="entry name" value="PolY_Pol_IV_kappa"/>
    <property type="match status" value="1"/>
</dbReference>
<dbReference type="FunFam" id="3.30.1490.100:FF:000016">
    <property type="entry name" value="DNA polymerase IV"/>
    <property type="match status" value="1"/>
</dbReference>
<dbReference type="FunFam" id="3.40.1170.60:FF:000001">
    <property type="entry name" value="DNA polymerase IV"/>
    <property type="match status" value="1"/>
</dbReference>
<dbReference type="Gene3D" id="3.30.70.270">
    <property type="match status" value="1"/>
</dbReference>
<dbReference type="Gene3D" id="3.40.1170.60">
    <property type="match status" value="1"/>
</dbReference>
<dbReference type="Gene3D" id="1.10.150.20">
    <property type="entry name" value="5' to 3' exonuclease, C-terminal subdomain"/>
    <property type="match status" value="1"/>
</dbReference>
<dbReference type="Gene3D" id="3.30.1490.100">
    <property type="entry name" value="DNA polymerase, Y-family, little finger domain"/>
    <property type="match status" value="1"/>
</dbReference>
<dbReference type="HAMAP" id="MF_01113">
    <property type="entry name" value="DNApol_IV"/>
    <property type="match status" value="1"/>
</dbReference>
<dbReference type="InterPro" id="IPR043502">
    <property type="entry name" value="DNA/RNA_pol_sf"/>
</dbReference>
<dbReference type="InterPro" id="IPR036775">
    <property type="entry name" value="DNA_pol_Y-fam_lit_finger_sf"/>
</dbReference>
<dbReference type="InterPro" id="IPR017961">
    <property type="entry name" value="DNA_pol_Y-fam_little_finger"/>
</dbReference>
<dbReference type="InterPro" id="IPR050116">
    <property type="entry name" value="DNA_polymerase-Y"/>
</dbReference>
<dbReference type="InterPro" id="IPR022880">
    <property type="entry name" value="DNApol_IV"/>
</dbReference>
<dbReference type="InterPro" id="IPR024728">
    <property type="entry name" value="PolY_HhH_motif"/>
</dbReference>
<dbReference type="InterPro" id="IPR043128">
    <property type="entry name" value="Rev_trsase/Diguanyl_cyclase"/>
</dbReference>
<dbReference type="InterPro" id="IPR001126">
    <property type="entry name" value="UmuC"/>
</dbReference>
<dbReference type="NCBIfam" id="NF002677">
    <property type="entry name" value="PRK02406.1"/>
    <property type="match status" value="1"/>
</dbReference>
<dbReference type="PANTHER" id="PTHR11076:SF33">
    <property type="entry name" value="DNA POLYMERASE KAPPA"/>
    <property type="match status" value="1"/>
</dbReference>
<dbReference type="PANTHER" id="PTHR11076">
    <property type="entry name" value="DNA REPAIR POLYMERASE UMUC / TRANSFERASE FAMILY MEMBER"/>
    <property type="match status" value="1"/>
</dbReference>
<dbReference type="Pfam" id="PF00817">
    <property type="entry name" value="IMS"/>
    <property type="match status" value="1"/>
</dbReference>
<dbReference type="Pfam" id="PF11799">
    <property type="entry name" value="IMS_C"/>
    <property type="match status" value="1"/>
</dbReference>
<dbReference type="Pfam" id="PF11798">
    <property type="entry name" value="IMS_HHH"/>
    <property type="match status" value="1"/>
</dbReference>
<dbReference type="SUPFAM" id="SSF56672">
    <property type="entry name" value="DNA/RNA polymerases"/>
    <property type="match status" value="1"/>
</dbReference>
<dbReference type="SUPFAM" id="SSF100879">
    <property type="entry name" value="Lesion bypass DNA polymerase (Y-family), little finger domain"/>
    <property type="match status" value="1"/>
</dbReference>
<dbReference type="PROSITE" id="PS50173">
    <property type="entry name" value="UMUC"/>
    <property type="match status" value="1"/>
</dbReference>
<comment type="function">
    <text evidence="1">Poorly processive, error-prone DNA polymerase involved in untargeted mutagenesis. Copies undamaged DNA at stalled replication forks, which arise in vivo from mismatched or misaligned primer ends. These misaligned primers can be extended by PolIV. Exhibits no 3'-5' exonuclease (proofreading) activity. May be involved in translesional synthesis, in conjunction with the beta clamp from PolIII.</text>
</comment>
<comment type="catalytic activity">
    <reaction evidence="1">
        <text>DNA(n) + a 2'-deoxyribonucleoside 5'-triphosphate = DNA(n+1) + diphosphate</text>
        <dbReference type="Rhea" id="RHEA:22508"/>
        <dbReference type="Rhea" id="RHEA-COMP:17339"/>
        <dbReference type="Rhea" id="RHEA-COMP:17340"/>
        <dbReference type="ChEBI" id="CHEBI:33019"/>
        <dbReference type="ChEBI" id="CHEBI:61560"/>
        <dbReference type="ChEBI" id="CHEBI:173112"/>
        <dbReference type="EC" id="2.7.7.7"/>
    </reaction>
</comment>
<comment type="cofactor">
    <cofactor evidence="1">
        <name>Mg(2+)</name>
        <dbReference type="ChEBI" id="CHEBI:18420"/>
    </cofactor>
    <text evidence="1">Binds 2 magnesium ions per subunit.</text>
</comment>
<comment type="subunit">
    <text evidence="1">Monomer.</text>
</comment>
<comment type="subcellular location">
    <subcellularLocation>
        <location evidence="1">Cytoplasm</location>
    </subcellularLocation>
</comment>
<comment type="similarity">
    <text evidence="1">Belongs to the DNA polymerase type-Y family.</text>
</comment>
<evidence type="ECO:0000255" key="1">
    <source>
        <dbReference type="HAMAP-Rule" id="MF_01113"/>
    </source>
</evidence>
<name>DPO4_DEHM1</name>
<reference key="1">
    <citation type="journal article" date="2005" name="Science">
        <title>Genome sequence of the PCE-dechlorinating bacterium Dehalococcoides ethenogenes.</title>
        <authorList>
            <person name="Seshadri R."/>
            <person name="Adrian L."/>
            <person name="Fouts D.E."/>
            <person name="Eisen J.A."/>
            <person name="Phillippy A.M."/>
            <person name="Methe B.A."/>
            <person name="Ward N.L."/>
            <person name="Nelson W.C."/>
            <person name="DeBoy R.T."/>
            <person name="Khouri H.M."/>
            <person name="Kolonay J.F."/>
            <person name="Dodson R.J."/>
            <person name="Daugherty S.C."/>
            <person name="Brinkac L.M."/>
            <person name="Sullivan S.A."/>
            <person name="Madupu R."/>
            <person name="Nelson K.E."/>
            <person name="Kang K.H."/>
            <person name="Impraim M."/>
            <person name="Tran K."/>
            <person name="Robinson J.M."/>
            <person name="Forberger H.A."/>
            <person name="Fraser C.M."/>
            <person name="Zinder S.H."/>
            <person name="Heidelberg J.F."/>
        </authorList>
    </citation>
    <scope>NUCLEOTIDE SEQUENCE [LARGE SCALE GENOMIC DNA]</scope>
    <source>
        <strain>ATCC BAA-2266 / KCTC 15142 / 195</strain>
    </source>
</reference>
<organism>
    <name type="scientific">Dehalococcoides mccartyi (strain ATCC BAA-2266 / KCTC 15142 / 195)</name>
    <name type="common">Dehalococcoides ethenogenes (strain 195)</name>
    <dbReference type="NCBI Taxonomy" id="243164"/>
    <lineage>
        <taxon>Bacteria</taxon>
        <taxon>Bacillati</taxon>
        <taxon>Chloroflexota</taxon>
        <taxon>Dehalococcoidia</taxon>
        <taxon>Dehalococcoidales</taxon>
        <taxon>Dehalococcoidaceae</taxon>
        <taxon>Dehalococcoides</taxon>
    </lineage>
</organism>